<accession>B0TUD9</accession>
<dbReference type="EMBL" id="CP000931">
    <property type="protein sequence ID" value="ABZ75439.1"/>
    <property type="molecule type" value="Genomic_DNA"/>
</dbReference>
<dbReference type="RefSeq" id="WP_012275991.1">
    <property type="nucleotide sequence ID" value="NC_010334.1"/>
</dbReference>
<dbReference type="STRING" id="458817.Shal_0864"/>
<dbReference type="KEGG" id="shl:Shal_0864"/>
<dbReference type="eggNOG" id="COG3681">
    <property type="taxonomic scope" value="Bacteria"/>
</dbReference>
<dbReference type="HOGENOM" id="CLU_051840_0_0_6"/>
<dbReference type="OrthoDB" id="41906at2"/>
<dbReference type="Proteomes" id="UP000001317">
    <property type="component" value="Chromosome"/>
</dbReference>
<dbReference type="GO" id="GO:0080146">
    <property type="term" value="F:L-cysteine desulfhydrase activity"/>
    <property type="evidence" value="ECO:0007669"/>
    <property type="project" value="TreeGrafter"/>
</dbReference>
<dbReference type="GO" id="GO:0019450">
    <property type="term" value="P:L-cysteine catabolic process to pyruvate"/>
    <property type="evidence" value="ECO:0007669"/>
    <property type="project" value="TreeGrafter"/>
</dbReference>
<dbReference type="HAMAP" id="MF_01845">
    <property type="entry name" value="UPF0597"/>
    <property type="match status" value="1"/>
</dbReference>
<dbReference type="InterPro" id="IPR005130">
    <property type="entry name" value="Ser_deHydtase-like_asu"/>
</dbReference>
<dbReference type="InterPro" id="IPR021144">
    <property type="entry name" value="UPF0597"/>
</dbReference>
<dbReference type="PANTHER" id="PTHR30501">
    <property type="entry name" value="UPF0597 PROTEIN YHAM"/>
    <property type="match status" value="1"/>
</dbReference>
<dbReference type="PANTHER" id="PTHR30501:SF2">
    <property type="entry name" value="UPF0597 PROTEIN YHAM"/>
    <property type="match status" value="1"/>
</dbReference>
<dbReference type="Pfam" id="PF03313">
    <property type="entry name" value="SDH_alpha"/>
    <property type="match status" value="1"/>
</dbReference>
<dbReference type="PIRSF" id="PIRSF006054">
    <property type="entry name" value="UCP006054"/>
    <property type="match status" value="1"/>
</dbReference>
<reference key="1">
    <citation type="submission" date="2008-01" db="EMBL/GenBank/DDBJ databases">
        <title>Complete sequence of Shewanella halifaxensis HAW-EB4.</title>
        <authorList>
            <consortium name="US DOE Joint Genome Institute"/>
            <person name="Copeland A."/>
            <person name="Lucas S."/>
            <person name="Lapidus A."/>
            <person name="Glavina del Rio T."/>
            <person name="Dalin E."/>
            <person name="Tice H."/>
            <person name="Bruce D."/>
            <person name="Goodwin L."/>
            <person name="Pitluck S."/>
            <person name="Sims D."/>
            <person name="Brettin T."/>
            <person name="Detter J.C."/>
            <person name="Han C."/>
            <person name="Kuske C.R."/>
            <person name="Schmutz J."/>
            <person name="Larimer F."/>
            <person name="Land M."/>
            <person name="Hauser L."/>
            <person name="Kyrpides N."/>
            <person name="Kim E."/>
            <person name="Zhao J.-S."/>
            <person name="Richardson P."/>
        </authorList>
    </citation>
    <scope>NUCLEOTIDE SEQUENCE [LARGE SCALE GENOMIC DNA]</scope>
    <source>
        <strain>HAW-EB4</strain>
    </source>
</reference>
<proteinExistence type="inferred from homology"/>
<sequence>MKQHLWPLFLEAVKRDVVPALGCTEPISVALAAAIAIDELGIKNQASNVKLDVKIDVAVSANLMKNGMGVGIPGTGMVGLPIAAAIGAIAGDRHAGLEVLKSIKDSDVQAAKLMLANELVTVGVADVANILYAKVTVYYQQQTASVTIADSHTKVIAIEKNGEQCLLESQAKTTNDNSCKANPFTEAKLQDIYDFAMQAPLDDIRFIMQAKTLNDALSIEGLSGNYGLKIGATLVKNQAKGLLSGGLLTEVLARTAGASDARMDGAMMPAMSNSGSGNQGIAATMPVVACAEFLKSSETQTIRALMLSHLTAIYIKSYQNKLSALCGATTASMGAAAGITYLLDGELEQISAAICSMIGDVSGIICDGAKASCAMKVSSSAGSAVKSALMAIDGIRVTGTEGIVADDVDQTICNLATLANGAMTQTDVQILEIMLHK</sequence>
<gene>
    <name type="ordered locus">Shal_0864</name>
</gene>
<evidence type="ECO:0000255" key="1">
    <source>
        <dbReference type="HAMAP-Rule" id="MF_01845"/>
    </source>
</evidence>
<comment type="similarity">
    <text evidence="1">Belongs to the UPF0597 family.</text>
</comment>
<feature type="chain" id="PRO_0000339847" description="UPF0597 protein Shal_0864">
    <location>
        <begin position="1"/>
        <end position="437"/>
    </location>
</feature>
<name>Y864_SHEHH</name>
<organism>
    <name type="scientific">Shewanella halifaxensis (strain HAW-EB4)</name>
    <dbReference type="NCBI Taxonomy" id="458817"/>
    <lineage>
        <taxon>Bacteria</taxon>
        <taxon>Pseudomonadati</taxon>
        <taxon>Pseudomonadota</taxon>
        <taxon>Gammaproteobacteria</taxon>
        <taxon>Alteromonadales</taxon>
        <taxon>Shewanellaceae</taxon>
        <taxon>Shewanella</taxon>
    </lineage>
</organism>
<protein>
    <recommendedName>
        <fullName evidence="1">UPF0597 protein Shal_0864</fullName>
    </recommendedName>
</protein>